<name>SYL_FRATO</name>
<evidence type="ECO:0000255" key="1">
    <source>
        <dbReference type="HAMAP-Rule" id="MF_00049"/>
    </source>
</evidence>
<protein>
    <recommendedName>
        <fullName evidence="1">Leucine--tRNA ligase</fullName>
        <ecNumber evidence="1">6.1.1.4</ecNumber>
    </recommendedName>
    <alternativeName>
        <fullName evidence="1">Leucyl-tRNA synthetase</fullName>
        <shortName evidence="1">LeuRS</shortName>
    </alternativeName>
</protein>
<dbReference type="EC" id="6.1.1.4" evidence="1"/>
<dbReference type="EMBL" id="CP000437">
    <property type="protein sequence ID" value="ABI83047.1"/>
    <property type="molecule type" value="Genomic_DNA"/>
</dbReference>
<dbReference type="RefSeq" id="WP_003016304.1">
    <property type="nucleotide sequence ID" value="NC_017463.1"/>
</dbReference>
<dbReference type="SMR" id="Q0BLI7"/>
<dbReference type="KEGG" id="fth:FTH_1186"/>
<dbReference type="GO" id="GO:0005829">
    <property type="term" value="C:cytosol"/>
    <property type="evidence" value="ECO:0007669"/>
    <property type="project" value="TreeGrafter"/>
</dbReference>
<dbReference type="GO" id="GO:0002161">
    <property type="term" value="F:aminoacyl-tRNA deacylase activity"/>
    <property type="evidence" value="ECO:0007669"/>
    <property type="project" value="InterPro"/>
</dbReference>
<dbReference type="GO" id="GO:0005524">
    <property type="term" value="F:ATP binding"/>
    <property type="evidence" value="ECO:0007669"/>
    <property type="project" value="UniProtKB-UniRule"/>
</dbReference>
<dbReference type="GO" id="GO:0004823">
    <property type="term" value="F:leucine-tRNA ligase activity"/>
    <property type="evidence" value="ECO:0007669"/>
    <property type="project" value="UniProtKB-UniRule"/>
</dbReference>
<dbReference type="GO" id="GO:0006429">
    <property type="term" value="P:leucyl-tRNA aminoacylation"/>
    <property type="evidence" value="ECO:0007669"/>
    <property type="project" value="UniProtKB-UniRule"/>
</dbReference>
<dbReference type="CDD" id="cd07958">
    <property type="entry name" value="Anticodon_Ia_Leu_BEm"/>
    <property type="match status" value="1"/>
</dbReference>
<dbReference type="CDD" id="cd00812">
    <property type="entry name" value="LeuRS_core"/>
    <property type="match status" value="1"/>
</dbReference>
<dbReference type="FunFam" id="1.10.730.10:FF:000002">
    <property type="entry name" value="Leucine--tRNA ligase"/>
    <property type="match status" value="1"/>
</dbReference>
<dbReference type="FunFam" id="3.10.20.590:FF:000001">
    <property type="entry name" value="Leucine--tRNA ligase"/>
    <property type="match status" value="1"/>
</dbReference>
<dbReference type="FunFam" id="3.40.50.620:FF:000056">
    <property type="entry name" value="Leucine--tRNA ligase"/>
    <property type="match status" value="1"/>
</dbReference>
<dbReference type="FunFam" id="3.40.50.620:FF:000395">
    <property type="entry name" value="Leucine--tRNA ligase"/>
    <property type="match status" value="1"/>
</dbReference>
<dbReference type="FunFam" id="3.90.740.10:FF:000012">
    <property type="entry name" value="Leucine--tRNA ligase"/>
    <property type="match status" value="1"/>
</dbReference>
<dbReference type="Gene3D" id="3.10.20.590">
    <property type="match status" value="1"/>
</dbReference>
<dbReference type="Gene3D" id="3.40.50.620">
    <property type="entry name" value="HUPs"/>
    <property type="match status" value="2"/>
</dbReference>
<dbReference type="Gene3D" id="1.10.730.10">
    <property type="entry name" value="Isoleucyl-tRNA Synthetase, Domain 1"/>
    <property type="match status" value="1"/>
</dbReference>
<dbReference type="HAMAP" id="MF_00049_B">
    <property type="entry name" value="Leu_tRNA_synth_B"/>
    <property type="match status" value="1"/>
</dbReference>
<dbReference type="InterPro" id="IPR001412">
    <property type="entry name" value="aa-tRNA-synth_I_CS"/>
</dbReference>
<dbReference type="InterPro" id="IPR002300">
    <property type="entry name" value="aa-tRNA-synth_Ia"/>
</dbReference>
<dbReference type="InterPro" id="IPR002302">
    <property type="entry name" value="Leu-tRNA-ligase"/>
</dbReference>
<dbReference type="InterPro" id="IPR025709">
    <property type="entry name" value="Leu_tRNA-synth_edit"/>
</dbReference>
<dbReference type="InterPro" id="IPR013155">
    <property type="entry name" value="M/V/L/I-tRNA-synth_anticd-bd"/>
</dbReference>
<dbReference type="InterPro" id="IPR015413">
    <property type="entry name" value="Methionyl/Leucyl_tRNA_Synth"/>
</dbReference>
<dbReference type="InterPro" id="IPR014729">
    <property type="entry name" value="Rossmann-like_a/b/a_fold"/>
</dbReference>
<dbReference type="InterPro" id="IPR009080">
    <property type="entry name" value="tRNAsynth_Ia_anticodon-bd"/>
</dbReference>
<dbReference type="InterPro" id="IPR009008">
    <property type="entry name" value="Val/Leu/Ile-tRNA-synth_edit"/>
</dbReference>
<dbReference type="NCBIfam" id="TIGR00396">
    <property type="entry name" value="leuS_bact"/>
    <property type="match status" value="1"/>
</dbReference>
<dbReference type="PANTHER" id="PTHR43740:SF2">
    <property type="entry name" value="LEUCINE--TRNA LIGASE, MITOCHONDRIAL"/>
    <property type="match status" value="1"/>
</dbReference>
<dbReference type="PANTHER" id="PTHR43740">
    <property type="entry name" value="LEUCYL-TRNA SYNTHETASE"/>
    <property type="match status" value="1"/>
</dbReference>
<dbReference type="Pfam" id="PF08264">
    <property type="entry name" value="Anticodon_1"/>
    <property type="match status" value="1"/>
</dbReference>
<dbReference type="Pfam" id="PF00133">
    <property type="entry name" value="tRNA-synt_1"/>
    <property type="match status" value="1"/>
</dbReference>
<dbReference type="Pfam" id="PF13603">
    <property type="entry name" value="tRNA-synt_1_2"/>
    <property type="match status" value="1"/>
</dbReference>
<dbReference type="Pfam" id="PF09334">
    <property type="entry name" value="tRNA-synt_1g"/>
    <property type="match status" value="1"/>
</dbReference>
<dbReference type="PRINTS" id="PR00985">
    <property type="entry name" value="TRNASYNTHLEU"/>
</dbReference>
<dbReference type="SUPFAM" id="SSF47323">
    <property type="entry name" value="Anticodon-binding domain of a subclass of class I aminoacyl-tRNA synthetases"/>
    <property type="match status" value="1"/>
</dbReference>
<dbReference type="SUPFAM" id="SSF52374">
    <property type="entry name" value="Nucleotidylyl transferase"/>
    <property type="match status" value="1"/>
</dbReference>
<dbReference type="SUPFAM" id="SSF50677">
    <property type="entry name" value="ValRS/IleRS/LeuRS editing domain"/>
    <property type="match status" value="1"/>
</dbReference>
<dbReference type="PROSITE" id="PS00178">
    <property type="entry name" value="AA_TRNA_LIGASE_I"/>
    <property type="match status" value="1"/>
</dbReference>
<reference key="1">
    <citation type="journal article" date="2006" name="J. Bacteriol.">
        <title>Chromosome rearrangement and diversification of Francisella tularensis revealed by the type B (OSU18) genome sequence.</title>
        <authorList>
            <person name="Petrosino J.F."/>
            <person name="Xiang Q."/>
            <person name="Karpathy S.E."/>
            <person name="Jiang H."/>
            <person name="Yerrapragada S."/>
            <person name="Liu Y."/>
            <person name="Gioia J."/>
            <person name="Hemphill L."/>
            <person name="Gonzalez A."/>
            <person name="Raghavan T.M."/>
            <person name="Uzman A."/>
            <person name="Fox G.E."/>
            <person name="Highlander S."/>
            <person name="Reichard M."/>
            <person name="Morton R.J."/>
            <person name="Clinkenbeard K.D."/>
            <person name="Weinstock G.M."/>
        </authorList>
    </citation>
    <scope>NUCLEOTIDE SEQUENCE [LARGE SCALE GENOMIC DNA]</scope>
    <source>
        <strain>OSU18</strain>
    </source>
</reference>
<feature type="chain" id="PRO_1000009344" description="Leucine--tRNA ligase">
    <location>
        <begin position="1"/>
        <end position="813"/>
    </location>
</feature>
<feature type="short sequence motif" description="'HIGH' region">
    <location>
        <begin position="41"/>
        <end position="51"/>
    </location>
</feature>
<feature type="short sequence motif" description="'KMSKS' region">
    <location>
        <begin position="575"/>
        <end position="579"/>
    </location>
</feature>
<feature type="binding site" evidence="1">
    <location>
        <position position="578"/>
    </location>
    <ligand>
        <name>ATP</name>
        <dbReference type="ChEBI" id="CHEBI:30616"/>
    </ligand>
</feature>
<sequence>MNEYNFSDIEKSTQEYWRKNDTFKTIEDNTKEKFYCLSMLPYPSGTLHMGHVRNYTIGDVIARYQKMQGKNVLHPMGWDAFGLPAENAAIKHKKSPYEWTKSNIAYMRSQFDSLGFSFDWSREIATCDEDYYKWEQWFFIQLYKKGLAYRKNSVVNWDPVDQTVLANEQVVDGRGWRSGALVEKKEIPQWFLKITDYADELLQDINKLDNWPEAVKTMQINWIGKSKGLTVKFKVKDSNQEIEVFTTRPDTLMGVNYLGIAPEHPLALKEAKSNSQLAAFIEECKKTSTMEADLATQEKKGFKTSIKVIHPISAETIDVWVANFVLMGYGSGAVMSVPAHDQRDWEFAQKYNIPLKQVIESNDNKLKIDLEKQAFTEKGILINSGEFDGLNFKNAYQAIKKYLTKQNKGYETTNFRIHDWGISRQRYWGCPIPMIHCDDCGAVPEKEENLPVRLPTDVALTEAGSPLKDIPEFINVACPECGKPAKRETDTFDTFFESSWYYARYTCPTSNQMLDQEANYWLPVDKYIGGIEHAIMHLLYARFFHKLMRDQGLVKSDEPFKNLLTQGMVLKDGAKMSKSKGNIVDPQELIDKYGADTVRLFSMFAASPEQSLEWSETGVEGANKFLRKVFNYAELNKVIFAKNITLESQKLTKEDKKARFEIHSNLKQAIFDFDKSQFNTVVSACMKILNTLNNYDNLSESVKVEGFSILLRILAPFTPHLCHYLWQQLNLGEDILHTSFPTVDNNALEKDEFLLVVQINGKLKAKLELDASLSSNQVEEVVLADEHVKSFIDNKQVVKVIYVPQKLINIVIK</sequence>
<organism>
    <name type="scientific">Francisella tularensis subsp. holarctica (strain OSU18)</name>
    <dbReference type="NCBI Taxonomy" id="393011"/>
    <lineage>
        <taxon>Bacteria</taxon>
        <taxon>Pseudomonadati</taxon>
        <taxon>Pseudomonadota</taxon>
        <taxon>Gammaproteobacteria</taxon>
        <taxon>Thiotrichales</taxon>
        <taxon>Francisellaceae</taxon>
        <taxon>Francisella</taxon>
    </lineage>
</organism>
<gene>
    <name evidence="1" type="primary">leuS</name>
    <name type="ordered locus">FTH_1186</name>
</gene>
<accession>Q0BLI7</accession>
<comment type="catalytic activity">
    <reaction evidence="1">
        <text>tRNA(Leu) + L-leucine + ATP = L-leucyl-tRNA(Leu) + AMP + diphosphate</text>
        <dbReference type="Rhea" id="RHEA:11688"/>
        <dbReference type="Rhea" id="RHEA-COMP:9613"/>
        <dbReference type="Rhea" id="RHEA-COMP:9622"/>
        <dbReference type="ChEBI" id="CHEBI:30616"/>
        <dbReference type="ChEBI" id="CHEBI:33019"/>
        <dbReference type="ChEBI" id="CHEBI:57427"/>
        <dbReference type="ChEBI" id="CHEBI:78442"/>
        <dbReference type="ChEBI" id="CHEBI:78494"/>
        <dbReference type="ChEBI" id="CHEBI:456215"/>
        <dbReference type="EC" id="6.1.1.4"/>
    </reaction>
</comment>
<comment type="subcellular location">
    <subcellularLocation>
        <location evidence="1">Cytoplasm</location>
    </subcellularLocation>
</comment>
<comment type="similarity">
    <text evidence="1">Belongs to the class-I aminoacyl-tRNA synthetase family.</text>
</comment>
<proteinExistence type="inferred from homology"/>
<keyword id="KW-0030">Aminoacyl-tRNA synthetase</keyword>
<keyword id="KW-0067">ATP-binding</keyword>
<keyword id="KW-0963">Cytoplasm</keyword>
<keyword id="KW-0436">Ligase</keyword>
<keyword id="KW-0547">Nucleotide-binding</keyword>
<keyword id="KW-0648">Protein biosynthesis</keyword>